<proteinExistence type="inferred from homology"/>
<protein>
    <recommendedName>
        <fullName evidence="1">2,3-bisphosphoglycerate-independent phosphoglycerate mutase</fullName>
        <shortName evidence="1">BPG-independent PGAM</shortName>
        <shortName evidence="1">Phosphoglyceromutase</shortName>
        <shortName evidence="1">aPGAM</shortName>
        <ecNumber evidence="1">5.4.2.12</ecNumber>
    </recommendedName>
</protein>
<name>APGM_SULAC</name>
<organism>
    <name type="scientific">Sulfolobus acidocaldarius (strain ATCC 33909 / DSM 639 / JCM 8929 / NBRC 15157 / NCIMB 11770)</name>
    <dbReference type="NCBI Taxonomy" id="330779"/>
    <lineage>
        <taxon>Archaea</taxon>
        <taxon>Thermoproteota</taxon>
        <taxon>Thermoprotei</taxon>
        <taxon>Sulfolobales</taxon>
        <taxon>Sulfolobaceae</taxon>
        <taxon>Sulfolobus</taxon>
    </lineage>
</organism>
<keyword id="KW-0324">Glycolysis</keyword>
<keyword id="KW-0413">Isomerase</keyword>
<keyword id="KW-1185">Reference proteome</keyword>
<accession>Q4JAH5</accession>
<feature type="chain" id="PRO_0000138147" description="2,3-bisphosphoglycerate-independent phosphoglycerate mutase">
    <location>
        <begin position="1"/>
        <end position="413"/>
    </location>
</feature>
<reference key="1">
    <citation type="journal article" date="2005" name="J. Bacteriol.">
        <title>The genome of Sulfolobus acidocaldarius, a model organism of the Crenarchaeota.</title>
        <authorList>
            <person name="Chen L."/>
            <person name="Bruegger K."/>
            <person name="Skovgaard M."/>
            <person name="Redder P."/>
            <person name="She Q."/>
            <person name="Torarinsson E."/>
            <person name="Greve B."/>
            <person name="Awayez M."/>
            <person name="Zibat A."/>
            <person name="Klenk H.-P."/>
            <person name="Garrett R.A."/>
        </authorList>
    </citation>
    <scope>NUCLEOTIDE SEQUENCE [LARGE SCALE GENOMIC DNA]</scope>
    <source>
        <strain>ATCC 33909 / DSM 639 / JCM 8929 / NBRC 15157 / NCIMB 11770</strain>
    </source>
</reference>
<sequence length="413" mass="45166">MKQYKILLFIADGLGDRPVTKLEHKTPLEAVEKPNIGELLKNSIAGLMDPISPGIVPGSDTSHLAIFGIDPFKYYRGRGAFEAIGAGARLKAGDVAFRGNFATVDNNLTVIDRRAGRKVDEAKDLVQELNSKIGEIDGVQVKFYHGTEHRVAVVLSGKGLSDKISDTDPHETGVKVKKSEATDDTREAKITAEVLNKLTNRIYDILSSSELNKKRIERGELPANIVLLRGAAQYVDLPKFYDYTKINAAAVSATALIKGICSQIGMNVVTPKGATGGLDTNYIGKAEEASKLLKEYDMVFLHLKATDAASHDGNIDGKLYAISMIDKMIGRVLDIYGSELIIAITGDHATPVEVKEHTGDPVPFLLYVPYNIVADNVDDFNEKQLRKGSLRIKGLDVINLLLNYSYRYEKFGA</sequence>
<evidence type="ECO:0000255" key="1">
    <source>
        <dbReference type="HAMAP-Rule" id="MF_01402"/>
    </source>
</evidence>
<dbReference type="EC" id="5.4.2.12" evidence="1"/>
<dbReference type="EMBL" id="CP000077">
    <property type="protein sequence ID" value="AAY80204.1"/>
    <property type="molecule type" value="Genomic_DNA"/>
</dbReference>
<dbReference type="RefSeq" id="WP_011277706.1">
    <property type="nucleotide sequence ID" value="NC_007181.1"/>
</dbReference>
<dbReference type="SMR" id="Q4JAH5"/>
<dbReference type="STRING" id="330779.Saci_0837"/>
<dbReference type="GeneID" id="14551350"/>
<dbReference type="KEGG" id="sai:Saci_0837"/>
<dbReference type="PATRIC" id="fig|330779.12.peg.801"/>
<dbReference type="eggNOG" id="arCOG01696">
    <property type="taxonomic scope" value="Archaea"/>
</dbReference>
<dbReference type="HOGENOM" id="CLU_034906_2_0_2"/>
<dbReference type="UniPathway" id="UPA00109">
    <property type="reaction ID" value="UER00186"/>
</dbReference>
<dbReference type="Proteomes" id="UP000001018">
    <property type="component" value="Chromosome"/>
</dbReference>
<dbReference type="GO" id="GO:0046872">
    <property type="term" value="F:metal ion binding"/>
    <property type="evidence" value="ECO:0007669"/>
    <property type="project" value="InterPro"/>
</dbReference>
<dbReference type="GO" id="GO:0004619">
    <property type="term" value="F:phosphoglycerate mutase activity"/>
    <property type="evidence" value="ECO:0007669"/>
    <property type="project" value="UniProtKB-EC"/>
</dbReference>
<dbReference type="GO" id="GO:0006096">
    <property type="term" value="P:glycolytic process"/>
    <property type="evidence" value="ECO:0007669"/>
    <property type="project" value="UniProtKB-UniRule"/>
</dbReference>
<dbReference type="CDD" id="cd16011">
    <property type="entry name" value="iPGM_like"/>
    <property type="match status" value="1"/>
</dbReference>
<dbReference type="Gene3D" id="3.40.720.10">
    <property type="entry name" value="Alkaline Phosphatase, subunit A"/>
    <property type="match status" value="2"/>
</dbReference>
<dbReference type="HAMAP" id="MF_01402_A">
    <property type="entry name" value="ApgM_A"/>
    <property type="match status" value="1"/>
</dbReference>
<dbReference type="InterPro" id="IPR017850">
    <property type="entry name" value="Alkaline_phosphatase_core_sf"/>
</dbReference>
<dbReference type="InterPro" id="IPR023665">
    <property type="entry name" value="ApgAM_prokaryotes"/>
</dbReference>
<dbReference type="InterPro" id="IPR006124">
    <property type="entry name" value="Metalloenzyme"/>
</dbReference>
<dbReference type="InterPro" id="IPR004456">
    <property type="entry name" value="Pglycerate_mutase_ApgM"/>
</dbReference>
<dbReference type="NCBIfam" id="TIGR00306">
    <property type="entry name" value="apgM"/>
    <property type="match status" value="1"/>
</dbReference>
<dbReference type="NCBIfam" id="NF003104">
    <property type="entry name" value="PRK04024.1"/>
    <property type="match status" value="1"/>
</dbReference>
<dbReference type="PANTHER" id="PTHR31209">
    <property type="entry name" value="COFACTOR-INDEPENDENT PHOSPHOGLYCERATE MUTASE"/>
    <property type="match status" value="1"/>
</dbReference>
<dbReference type="PANTHER" id="PTHR31209:SF0">
    <property type="entry name" value="METALLOENZYME DOMAIN-CONTAINING PROTEIN"/>
    <property type="match status" value="1"/>
</dbReference>
<dbReference type="Pfam" id="PF01676">
    <property type="entry name" value="Metalloenzyme"/>
    <property type="match status" value="1"/>
</dbReference>
<dbReference type="Pfam" id="PF10143">
    <property type="entry name" value="PhosphMutase"/>
    <property type="match status" value="1"/>
</dbReference>
<dbReference type="PIRSF" id="PIRSF006392">
    <property type="entry name" value="IPGAM_arch"/>
    <property type="match status" value="1"/>
</dbReference>
<dbReference type="SUPFAM" id="SSF53649">
    <property type="entry name" value="Alkaline phosphatase-like"/>
    <property type="match status" value="1"/>
</dbReference>
<comment type="function">
    <text evidence="1">Catalyzes the interconversion of 2-phosphoglycerate and 3-phosphoglycerate.</text>
</comment>
<comment type="catalytic activity">
    <reaction evidence="1">
        <text>(2R)-2-phosphoglycerate = (2R)-3-phosphoglycerate</text>
        <dbReference type="Rhea" id="RHEA:15901"/>
        <dbReference type="ChEBI" id="CHEBI:58272"/>
        <dbReference type="ChEBI" id="CHEBI:58289"/>
        <dbReference type="EC" id="5.4.2.12"/>
    </reaction>
</comment>
<comment type="pathway">
    <text evidence="1">Carbohydrate degradation; glycolysis; pyruvate from D-glyceraldehyde 3-phosphate: step 3/5.</text>
</comment>
<comment type="similarity">
    <text evidence="1">Belongs to the BPG-independent phosphoglycerate mutase family. A-PGAM subfamily.</text>
</comment>
<gene>
    <name evidence="1" type="primary">apgM</name>
    <name type="ordered locus">Saci_0837</name>
</gene>